<dbReference type="EMBL" id="X14432">
    <property type="protein sequence ID" value="CAA32597.1"/>
    <property type="molecule type" value="mRNA"/>
</dbReference>
<dbReference type="EMBL" id="BC019154">
    <property type="protein sequence ID" value="AAH19154.1"/>
    <property type="molecule type" value="mRNA"/>
</dbReference>
<dbReference type="CCDS" id="CCDS16838.1"/>
<dbReference type="PIR" id="S08488">
    <property type="entry name" value="A60501"/>
</dbReference>
<dbReference type="RefSeq" id="NP_033404.1">
    <property type="nucleotide sequence ID" value="NM_009378.3"/>
</dbReference>
<dbReference type="SMR" id="P15306"/>
<dbReference type="BioGRID" id="204174">
    <property type="interactions" value="2"/>
</dbReference>
<dbReference type="FunCoup" id="P15306">
    <property type="interactions" value="163"/>
</dbReference>
<dbReference type="IntAct" id="P15306">
    <property type="interactions" value="1"/>
</dbReference>
<dbReference type="MINT" id="P15306"/>
<dbReference type="STRING" id="10090.ENSMUSP00000096877"/>
<dbReference type="GlyCosmos" id="P15306">
    <property type="glycosylation" value="5 sites, No reported glycans"/>
</dbReference>
<dbReference type="GlyGen" id="P15306">
    <property type="glycosylation" value="6 sites, 1 N-linked glycan (1 site)"/>
</dbReference>
<dbReference type="iPTMnet" id="P15306"/>
<dbReference type="PhosphoSitePlus" id="P15306"/>
<dbReference type="PaxDb" id="10090-ENSMUSP00000096877"/>
<dbReference type="PeptideAtlas" id="P15306"/>
<dbReference type="ProteomicsDB" id="298287"/>
<dbReference type="Pumba" id="P15306"/>
<dbReference type="Antibodypedia" id="792">
    <property type="antibodies" value="1029 antibodies from 44 providers"/>
</dbReference>
<dbReference type="DNASU" id="21824"/>
<dbReference type="Ensembl" id="ENSMUST00000099270.5">
    <property type="protein sequence ID" value="ENSMUSP00000096877.4"/>
    <property type="gene ID" value="ENSMUSG00000074743.5"/>
</dbReference>
<dbReference type="GeneID" id="21824"/>
<dbReference type="KEGG" id="mmu:21824"/>
<dbReference type="UCSC" id="uc008mtd.2">
    <property type="organism name" value="mouse"/>
</dbReference>
<dbReference type="AGR" id="MGI:98736"/>
<dbReference type="CTD" id="7056"/>
<dbReference type="MGI" id="MGI:98736">
    <property type="gene designation" value="Thbd"/>
</dbReference>
<dbReference type="VEuPathDB" id="HostDB:ENSMUSG00000074743"/>
<dbReference type="eggNOG" id="ENOG502R1T7">
    <property type="taxonomic scope" value="Eukaryota"/>
</dbReference>
<dbReference type="GeneTree" id="ENSGT00940000163276"/>
<dbReference type="HOGENOM" id="CLU_027075_2_1_1"/>
<dbReference type="InParanoid" id="P15306"/>
<dbReference type="OMA" id="CMCETGY"/>
<dbReference type="OrthoDB" id="4062651at2759"/>
<dbReference type="PhylomeDB" id="P15306"/>
<dbReference type="TreeFam" id="TF330714"/>
<dbReference type="Reactome" id="R-MMU-140875">
    <property type="pathway name" value="Common Pathway of Fibrin Clot Formation"/>
</dbReference>
<dbReference type="Reactome" id="R-MMU-202733">
    <property type="pathway name" value="Cell surface interactions at the vascular wall"/>
</dbReference>
<dbReference type="BioGRID-ORCS" id="21824">
    <property type="hits" value="3 hits in 77 CRISPR screens"/>
</dbReference>
<dbReference type="PRO" id="PR:P15306"/>
<dbReference type="Proteomes" id="UP000000589">
    <property type="component" value="Chromosome 2"/>
</dbReference>
<dbReference type="RNAct" id="P15306">
    <property type="molecule type" value="protein"/>
</dbReference>
<dbReference type="Bgee" id="ENSMUSG00000074743">
    <property type="expression patterns" value="Expressed in right lung lobe and 260 other cell types or tissues"/>
</dbReference>
<dbReference type="ExpressionAtlas" id="P15306">
    <property type="expression patterns" value="baseline and differential"/>
</dbReference>
<dbReference type="GO" id="GO:0016327">
    <property type="term" value="C:apicolateral plasma membrane"/>
    <property type="evidence" value="ECO:0007669"/>
    <property type="project" value="Ensembl"/>
</dbReference>
<dbReference type="GO" id="GO:0009897">
    <property type="term" value="C:external side of plasma membrane"/>
    <property type="evidence" value="ECO:0000314"/>
    <property type="project" value="MGI"/>
</dbReference>
<dbReference type="GO" id="GO:0005615">
    <property type="term" value="C:extracellular space"/>
    <property type="evidence" value="ECO:0007669"/>
    <property type="project" value="Ensembl"/>
</dbReference>
<dbReference type="GO" id="GO:0005886">
    <property type="term" value="C:plasma membrane"/>
    <property type="evidence" value="ECO:0000304"/>
    <property type="project" value="MGI"/>
</dbReference>
<dbReference type="GO" id="GO:1905370">
    <property type="term" value="C:serine-type endopeptidase complex"/>
    <property type="evidence" value="ECO:0007669"/>
    <property type="project" value="Ensembl"/>
</dbReference>
<dbReference type="GO" id="GO:0005774">
    <property type="term" value="C:vacuolar membrane"/>
    <property type="evidence" value="ECO:0007669"/>
    <property type="project" value="Ensembl"/>
</dbReference>
<dbReference type="GO" id="GO:0005509">
    <property type="term" value="F:calcium ion binding"/>
    <property type="evidence" value="ECO:0007669"/>
    <property type="project" value="InterPro"/>
</dbReference>
<dbReference type="GO" id="GO:0004888">
    <property type="term" value="F:transmembrane signaling receptor activity"/>
    <property type="evidence" value="ECO:0007669"/>
    <property type="project" value="InterPro"/>
</dbReference>
<dbReference type="GO" id="GO:0007596">
    <property type="term" value="P:blood coagulation"/>
    <property type="evidence" value="ECO:0000304"/>
    <property type="project" value="MGI"/>
</dbReference>
<dbReference type="GO" id="GO:0007565">
    <property type="term" value="P:female pregnancy"/>
    <property type="evidence" value="ECO:0000315"/>
    <property type="project" value="MGI"/>
</dbReference>
<dbReference type="GO" id="GO:0030195">
    <property type="term" value="P:negative regulation of blood coagulation"/>
    <property type="evidence" value="ECO:0007669"/>
    <property type="project" value="Ensembl"/>
</dbReference>
<dbReference type="GO" id="GO:0050819">
    <property type="term" value="P:negative regulation of coagulation"/>
    <property type="evidence" value="ECO:0000304"/>
    <property type="project" value="MGI"/>
</dbReference>
<dbReference type="GO" id="GO:0051591">
    <property type="term" value="P:response to cAMP"/>
    <property type="evidence" value="ECO:0007669"/>
    <property type="project" value="Ensembl"/>
</dbReference>
<dbReference type="GO" id="GO:0032496">
    <property type="term" value="P:response to lipopolysaccharide"/>
    <property type="evidence" value="ECO:0007669"/>
    <property type="project" value="Ensembl"/>
</dbReference>
<dbReference type="GO" id="GO:0010165">
    <property type="term" value="P:response to X-ray"/>
    <property type="evidence" value="ECO:0007669"/>
    <property type="project" value="Ensembl"/>
</dbReference>
<dbReference type="CDD" id="cd00054">
    <property type="entry name" value="EGF_CA"/>
    <property type="match status" value="1"/>
</dbReference>
<dbReference type="FunFam" id="2.10.25.10:FF:000406">
    <property type="entry name" value="CD248 molecule"/>
    <property type="match status" value="1"/>
</dbReference>
<dbReference type="FunFam" id="2.10.25.10:FF:000797">
    <property type="entry name" value="Thrombomodulin"/>
    <property type="match status" value="1"/>
</dbReference>
<dbReference type="FunFam" id="2.10.25.10:FF:000816">
    <property type="entry name" value="Thrombomodulin"/>
    <property type="match status" value="1"/>
</dbReference>
<dbReference type="FunFam" id="2.10.25.10:FF:000874">
    <property type="entry name" value="Thrombomodulin"/>
    <property type="match status" value="1"/>
</dbReference>
<dbReference type="FunFam" id="2.10.25.10:FF:000899">
    <property type="entry name" value="Thrombomodulin"/>
    <property type="match status" value="1"/>
</dbReference>
<dbReference type="FunFam" id="3.10.100.10:FF:000129">
    <property type="entry name" value="Thrombomodulin"/>
    <property type="match status" value="1"/>
</dbReference>
<dbReference type="Gene3D" id="2.10.25.10">
    <property type="entry name" value="Laminin"/>
    <property type="match status" value="6"/>
</dbReference>
<dbReference type="Gene3D" id="3.10.100.10">
    <property type="entry name" value="Mannose-Binding Protein A, subunit A"/>
    <property type="match status" value="1"/>
</dbReference>
<dbReference type="InterPro" id="IPR001304">
    <property type="entry name" value="C-type_lectin-like"/>
</dbReference>
<dbReference type="InterPro" id="IPR016186">
    <property type="entry name" value="C-type_lectin-like/link_sf"/>
</dbReference>
<dbReference type="InterPro" id="IPR026823">
    <property type="entry name" value="cEGF"/>
</dbReference>
<dbReference type="InterPro" id="IPR016187">
    <property type="entry name" value="CTDL_fold"/>
</dbReference>
<dbReference type="InterPro" id="IPR001881">
    <property type="entry name" value="EGF-like_Ca-bd_dom"/>
</dbReference>
<dbReference type="InterPro" id="IPR000742">
    <property type="entry name" value="EGF-like_dom"/>
</dbReference>
<dbReference type="InterPro" id="IPR000152">
    <property type="entry name" value="EGF-type_Asp/Asn_hydroxyl_site"/>
</dbReference>
<dbReference type="InterPro" id="IPR018097">
    <property type="entry name" value="EGF_Ca-bd_CS"/>
</dbReference>
<dbReference type="InterPro" id="IPR009030">
    <property type="entry name" value="Growth_fac_rcpt_cys_sf"/>
</dbReference>
<dbReference type="InterPro" id="IPR049883">
    <property type="entry name" value="NOTCH1_EGF-like"/>
</dbReference>
<dbReference type="InterPro" id="IPR052126">
    <property type="entry name" value="Spindle_Org/Thrombomodulin"/>
</dbReference>
<dbReference type="InterPro" id="IPR015149">
    <property type="entry name" value="Tme5_EGF-like"/>
</dbReference>
<dbReference type="PANTHER" id="PTHR24036">
    <property type="entry name" value="SKELETOR-RELATED"/>
    <property type="match status" value="1"/>
</dbReference>
<dbReference type="PANTHER" id="PTHR24036:SF5">
    <property type="entry name" value="THROMBOMODULIN"/>
    <property type="match status" value="1"/>
</dbReference>
<dbReference type="Pfam" id="PF12662">
    <property type="entry name" value="cEGF"/>
    <property type="match status" value="1"/>
</dbReference>
<dbReference type="Pfam" id="PF07645">
    <property type="entry name" value="EGF_CA"/>
    <property type="match status" value="1"/>
</dbReference>
<dbReference type="Pfam" id="PF09064">
    <property type="entry name" value="EGF_Tme5"/>
    <property type="match status" value="1"/>
</dbReference>
<dbReference type="Pfam" id="PF14670">
    <property type="entry name" value="FXa_inhibition"/>
    <property type="match status" value="1"/>
</dbReference>
<dbReference type="Pfam" id="PF00059">
    <property type="entry name" value="Lectin_C"/>
    <property type="match status" value="1"/>
</dbReference>
<dbReference type="Pfam" id="PF25444">
    <property type="entry name" value="THBD"/>
    <property type="match status" value="1"/>
</dbReference>
<dbReference type="PIRSF" id="PIRSF001775">
    <property type="entry name" value="CD93/CD141"/>
    <property type="match status" value="1"/>
</dbReference>
<dbReference type="PRINTS" id="PR00907">
    <property type="entry name" value="THRMBOMODULN"/>
</dbReference>
<dbReference type="SMART" id="SM00034">
    <property type="entry name" value="CLECT"/>
    <property type="match status" value="1"/>
</dbReference>
<dbReference type="SMART" id="SM00181">
    <property type="entry name" value="EGF"/>
    <property type="match status" value="6"/>
</dbReference>
<dbReference type="SMART" id="SM00179">
    <property type="entry name" value="EGF_CA"/>
    <property type="match status" value="4"/>
</dbReference>
<dbReference type="SUPFAM" id="SSF56436">
    <property type="entry name" value="C-type lectin-like"/>
    <property type="match status" value="1"/>
</dbReference>
<dbReference type="SUPFAM" id="SSF57196">
    <property type="entry name" value="EGF/Laminin"/>
    <property type="match status" value="3"/>
</dbReference>
<dbReference type="SUPFAM" id="SSF57184">
    <property type="entry name" value="Growth factor receptor domain"/>
    <property type="match status" value="1"/>
</dbReference>
<dbReference type="PROSITE" id="PS00010">
    <property type="entry name" value="ASX_HYDROXYL"/>
    <property type="match status" value="2"/>
</dbReference>
<dbReference type="PROSITE" id="PS50041">
    <property type="entry name" value="C_TYPE_LECTIN_2"/>
    <property type="match status" value="1"/>
</dbReference>
<dbReference type="PROSITE" id="PS01186">
    <property type="entry name" value="EGF_2"/>
    <property type="match status" value="3"/>
</dbReference>
<dbReference type="PROSITE" id="PS50026">
    <property type="entry name" value="EGF_3"/>
    <property type="match status" value="3"/>
</dbReference>
<dbReference type="PROSITE" id="PS01187">
    <property type="entry name" value="EGF_CA"/>
    <property type="match status" value="2"/>
</dbReference>
<organism>
    <name type="scientific">Mus musculus</name>
    <name type="common">Mouse</name>
    <dbReference type="NCBI Taxonomy" id="10090"/>
    <lineage>
        <taxon>Eukaryota</taxon>
        <taxon>Metazoa</taxon>
        <taxon>Chordata</taxon>
        <taxon>Craniata</taxon>
        <taxon>Vertebrata</taxon>
        <taxon>Euteleostomi</taxon>
        <taxon>Mammalia</taxon>
        <taxon>Eutheria</taxon>
        <taxon>Euarchontoglires</taxon>
        <taxon>Glires</taxon>
        <taxon>Rodentia</taxon>
        <taxon>Myomorpha</taxon>
        <taxon>Muroidea</taxon>
        <taxon>Muridae</taxon>
        <taxon>Murinae</taxon>
        <taxon>Mus</taxon>
        <taxon>Mus</taxon>
    </lineage>
</organism>
<accession>P15306</accession>
<protein>
    <recommendedName>
        <fullName>Thrombomodulin</fullName>
        <shortName>TM</shortName>
    </recommendedName>
    <alternativeName>
        <fullName>Fetomodulin</fullName>
    </alternativeName>
    <cdAntigenName>CD141</cdAntigenName>
</protein>
<proteinExistence type="evidence at protein level"/>
<gene>
    <name type="primary">Thbd</name>
</gene>
<evidence type="ECO:0000250" key="1"/>
<evidence type="ECO:0000250" key="2">
    <source>
        <dbReference type="UniProtKB" id="P07204"/>
    </source>
</evidence>
<evidence type="ECO:0000255" key="3"/>
<evidence type="ECO:0000255" key="4">
    <source>
        <dbReference type="PROSITE-ProRule" id="PRU00040"/>
    </source>
</evidence>
<evidence type="ECO:0000255" key="5">
    <source>
        <dbReference type="PROSITE-ProRule" id="PRU00076"/>
    </source>
</evidence>
<evidence type="ECO:0000256" key="6">
    <source>
        <dbReference type="SAM" id="MobiDB-lite"/>
    </source>
</evidence>
<evidence type="ECO:0000269" key="7">
    <source>
    </source>
</evidence>
<evidence type="ECO:0000269" key="8">
    <source>
    </source>
</evidence>
<evidence type="ECO:0000269" key="9">
    <source>
    </source>
</evidence>
<reference key="1">
    <citation type="journal article" date="1989" name="Nucleic Acids Res.">
        <title>Sequence of a cDNA for mouse thrombomodulin and comparison of the predicted mouse and human amino acid sequences.</title>
        <authorList>
            <person name="Dittman W.A."/>
            <person name="Majerus P.W."/>
        </authorList>
    </citation>
    <scope>NUCLEOTIDE SEQUENCE [MRNA]</scope>
</reference>
<reference key="2">
    <citation type="journal article" date="1988" name="J. Biol. Chem.">
        <title>The structure and function of mouse thrombomodulin. Phorbol myristate acetate stimulates degradation and synthesis of thrombomodulin without affecting mRNA levels in hemangioma cells.</title>
        <authorList>
            <person name="Dittman W.A."/>
            <person name="Kumada T."/>
            <person name="Sadler J.E."/>
            <person name="Majerus P.W."/>
        </authorList>
    </citation>
    <scope>NUCLEOTIDE SEQUENCE [MRNA]</scope>
</reference>
<reference key="3">
    <citation type="journal article" date="2004" name="Genome Res.">
        <title>The status, quality, and expansion of the NIH full-length cDNA project: the Mammalian Gene Collection (MGC).</title>
        <authorList>
            <consortium name="The MGC Project Team"/>
        </authorList>
    </citation>
    <scope>NUCLEOTIDE SEQUENCE [LARGE SCALE MRNA]</scope>
    <source>
        <strain>Czech II</strain>
        <tissue>Mammary gland</tissue>
    </source>
</reference>
<reference key="4">
    <citation type="journal article" date="1995" name="Proc. Natl. Acad. Sci. U.S.A.">
        <title>Absence of the blood-clotting regulator thrombomodulin causes embryonic lethality in mice before development of a functional cardiovascular system.</title>
        <authorList>
            <person name="Healy A.M."/>
            <person name="Rayburn H.B."/>
            <person name="Rosenberg R.D."/>
            <person name="Weiler H."/>
        </authorList>
    </citation>
    <scope>DISRUPTION PHENOTYPE</scope>
</reference>
<reference key="5">
    <citation type="journal article" date="2009" name="Mol. Cell. Proteomics">
        <title>The mouse C2C12 myoblast cell surface N-linked glycoproteome: identification, glycosite occupancy, and membrane orientation.</title>
        <authorList>
            <person name="Gundry R.L."/>
            <person name="Raginski K."/>
            <person name="Tarasova Y."/>
            <person name="Tchernyshyov I."/>
            <person name="Bausch-Fluck D."/>
            <person name="Elliott S.T."/>
            <person name="Boheler K.R."/>
            <person name="Van Eyk J.E."/>
            <person name="Wollscheid B."/>
        </authorList>
    </citation>
    <scope>GLYCOSYLATION [LARGE SCALE ANALYSIS] AT ASN-113</scope>
    <source>
        <tissue>Myoblast</tissue>
    </source>
</reference>
<reference key="6">
    <citation type="journal article" date="2010" name="Cell">
        <title>A tissue-specific atlas of mouse protein phosphorylation and expression.</title>
        <authorList>
            <person name="Huttlin E.L."/>
            <person name="Jedrychowski M.P."/>
            <person name="Elias J.E."/>
            <person name="Goswami T."/>
            <person name="Rad R."/>
            <person name="Beausoleil S.A."/>
            <person name="Villen J."/>
            <person name="Haas W."/>
            <person name="Sowa M.E."/>
            <person name="Gygi S.P."/>
        </authorList>
    </citation>
    <scope>IDENTIFICATION BY MASS SPECTROMETRY [LARGE SCALE ANALYSIS]</scope>
    <source>
        <tissue>Heart</tissue>
        <tissue>Kidney</tissue>
        <tissue>Lung</tissue>
        <tissue>Pancreas</tissue>
        <tissue>Spleen</tissue>
        <tissue>Testis</tissue>
    </source>
</reference>
<reference key="7">
    <citation type="journal article" date="2024" name="Arterioscler. Thromb. Vasc. Biol.">
        <title>Thrombomodulin Switches Signaling and Protease-Activated Receptor 1 Cleavage Specificity of Thrombin.</title>
        <authorList>
            <person name="Biswas I."/>
            <person name="Giri H."/>
            <person name="Panicker S.R."/>
            <person name="Rezaie A.R."/>
        </authorList>
    </citation>
    <scope>FUNCTION</scope>
    <scope>DISRUPTION PHENOTYPE</scope>
</reference>
<feature type="signal peptide" evidence="3">
    <location>
        <begin position="1"/>
        <end position="16"/>
    </location>
</feature>
<feature type="chain" id="PRO_0000007772" description="Thrombomodulin">
    <location>
        <begin position="17"/>
        <end position="577"/>
    </location>
</feature>
<feature type="topological domain" description="Extracellular" evidence="3">
    <location>
        <begin position="17"/>
        <end position="517"/>
    </location>
</feature>
<feature type="transmembrane region" description="Helical" evidence="3">
    <location>
        <begin position="518"/>
        <end position="541"/>
    </location>
</feature>
<feature type="topological domain" description="Cytoplasmic" evidence="3">
    <location>
        <begin position="542"/>
        <end position="577"/>
    </location>
</feature>
<feature type="domain" description="C-type lectin" evidence="4">
    <location>
        <begin position="31"/>
        <end position="167"/>
    </location>
</feature>
<feature type="domain" description="EGF-like 1" evidence="5">
    <location>
        <begin position="240"/>
        <end position="280"/>
    </location>
</feature>
<feature type="domain" description="EGF-like 2" evidence="5">
    <location>
        <begin position="283"/>
        <end position="323"/>
    </location>
</feature>
<feature type="domain" description="EGF-like 3; calcium-binding" evidence="5">
    <location>
        <begin position="324"/>
        <end position="362"/>
    </location>
</feature>
<feature type="domain" description="EGF-like 4" evidence="5">
    <location>
        <begin position="364"/>
        <end position="404"/>
    </location>
</feature>
<feature type="domain" description="EGF-like 5" evidence="5">
    <location>
        <begin position="403"/>
        <end position="439"/>
    </location>
</feature>
<feature type="domain" description="EGF-like 6; calcium-binding" evidence="5">
    <location>
        <begin position="440"/>
        <end position="480"/>
    </location>
</feature>
<feature type="region of interest" description="Disordered" evidence="6">
    <location>
        <begin position="476"/>
        <end position="513"/>
    </location>
</feature>
<feature type="compositionally biased region" description="Basic and acidic residues" evidence="6">
    <location>
        <begin position="477"/>
        <end position="492"/>
    </location>
</feature>
<feature type="compositionally biased region" description="Pro residues" evidence="6">
    <location>
        <begin position="498"/>
        <end position="512"/>
    </location>
</feature>
<feature type="glycosylation site" description="N-linked (GlcNAc...) asparagine" evidence="7">
    <location>
        <position position="113"/>
    </location>
</feature>
<feature type="glycosylation site" description="N-linked (GlcNAc...) asparagine" evidence="3">
    <location>
        <position position="243"/>
    </location>
</feature>
<feature type="glycosylation site" description="N-linked (GlcNAc...) asparagine" evidence="3">
    <location>
        <position position="256"/>
    </location>
</feature>
<feature type="glycosylation site" description="N-linked (GlcNAc...) asparagine" evidence="3">
    <location>
        <position position="408"/>
    </location>
</feature>
<feature type="glycosylation site" description="O-linked (Xyl...) (chondroitin sulfate) serine" evidence="2">
    <location>
        <position position="494"/>
    </location>
</feature>
<feature type="disulfide bond" evidence="1">
    <location>
        <begin position="135"/>
        <end position="156"/>
    </location>
</feature>
<feature type="disulfide bond" evidence="1">
    <location>
        <begin position="244"/>
        <end position="255"/>
    </location>
</feature>
<feature type="disulfide bond" evidence="1">
    <location>
        <begin position="251"/>
        <end position="264"/>
    </location>
</feature>
<feature type="disulfide bond" evidence="1">
    <location>
        <begin position="266"/>
        <end position="279"/>
    </location>
</feature>
<feature type="disulfide bond" evidence="1">
    <location>
        <begin position="287"/>
        <end position="295"/>
    </location>
</feature>
<feature type="disulfide bond" evidence="1">
    <location>
        <begin position="291"/>
        <end position="307"/>
    </location>
</feature>
<feature type="disulfide bond" evidence="1">
    <location>
        <begin position="309"/>
        <end position="322"/>
    </location>
</feature>
<feature type="disulfide bond" evidence="1">
    <location>
        <begin position="328"/>
        <end position="339"/>
    </location>
</feature>
<feature type="disulfide bond" evidence="1">
    <location>
        <begin position="335"/>
        <end position="348"/>
    </location>
</feature>
<feature type="disulfide bond" evidence="1">
    <location>
        <begin position="350"/>
        <end position="361"/>
    </location>
</feature>
<feature type="disulfide bond" evidence="1">
    <location>
        <begin position="368"/>
        <end position="377"/>
    </location>
</feature>
<feature type="disulfide bond" evidence="1">
    <location>
        <begin position="373"/>
        <end position="387"/>
    </location>
</feature>
<feature type="disulfide bond" evidence="1">
    <location>
        <begin position="389"/>
        <end position="403"/>
    </location>
</feature>
<feature type="disulfide bond" evidence="1">
    <location>
        <begin position="407"/>
        <end position="416"/>
    </location>
</feature>
<feature type="disulfide bond" evidence="1">
    <location>
        <begin position="412"/>
        <end position="424"/>
    </location>
</feature>
<feature type="disulfide bond" evidence="1">
    <location>
        <begin position="426"/>
        <end position="438"/>
    </location>
</feature>
<feature type="disulfide bond" evidence="1">
    <location>
        <begin position="444"/>
        <end position="454"/>
    </location>
</feature>
<feature type="disulfide bond" evidence="1">
    <location>
        <begin position="449"/>
        <end position="463"/>
    </location>
</feature>
<feature type="disulfide bond" evidence="1">
    <location>
        <begin position="465"/>
        <end position="479"/>
    </location>
</feature>
<name>TRBM_MOUSE</name>
<comment type="function">
    <text evidence="2 8">Endothelial cell receptor that plays a critical role in regulating several physiological processes including hemostasis, coagulation, fibrinolysis, inflammation, and angiogenesis. Acts as a cofactor for thrombin activation of protein C/PROC on the surface of vascular endothelial cells leading to initiation of the activated protein C anticoagulant pathway. Also accelerates the activation of the plasma carboxypeptidase B2/CPB2, which catalyzes removal of C-terminal basic amino acids from its substrates including kinins or anaphylatoxins leading to fibrinolysis inhibition (By similarity). Plays critical protective roles in changing the cleavage specificity of protease-activated receptor 1/PAR1, inhibiting endothelial cell permeability and inflammation (PubMed:38174561). Suppresses inflammation distinctly from its anticoagulant cofactor activity by sequestering HMGB1 thereby preventing it from engaging cellular receptors such as RAGE and contributing to the inflammatory response (By similarity).</text>
</comment>
<comment type="subunit">
    <text evidence="2">Interacts with ITGAL, ITGAM and ITGB2. Interacts with thrombin/F2; this interaction switches the specificity of thrombin from a procoagulant to an anticoagulant and antifibrinolytic protease. Interacts with ANGP1 and ANGP2; these interactions significantly inhibit the generation of activated PC and TAFIa/CPB2 by the thrombin/thrombomodulin complex. Interacts with PF4; this interaction enhances generation of activated protein C. Interacts with HMGB1; this interaction inhibits HMGB1 inflammatory activity.</text>
</comment>
<comment type="subcellular location">
    <subcellularLocation>
        <location evidence="2">Membrane</location>
        <topology evidence="2">Single-pass type I membrane protein</topology>
    </subcellularLocation>
</comment>
<comment type="tissue specificity">
    <text>Endothelial cells are unique in synthesizing thrombomodulin.</text>
</comment>
<comment type="disruption phenotype">
    <text evidence="9">Thbd-deficient embryos die before embryonic day 9.5. An overall retardation in growth and development starts on embryonic day 8.5 (PubMed:7846065).</text>
</comment>
<comment type="online information" name="Functional Glycomics Gateway - Glycan Binding">
    <link uri="http://www.functionalglycomics.org/glycomics/GBPServlet?&amp;operationType=view&amp;cbpId=cbp_mou_Ctlect_154"/>
    <text>Thrombomodulin</text>
</comment>
<sequence length="577" mass="61868">MLGIFFLGVLAPASLGLSALAKLQPTGSQCVEHECFALFQGPATFLDASQACQRLQGHLMTVRSSVAADVISLLLSQSSMDLGPWIGLQLPQGCDDPVHLGPLRGFQWVTGDNHTSYSRWARPNDQTAPLCGPLCVTVSTATEAAPGEPAWEEKPCETETQGFLCEFYFTASCRPLTVNTRDPEAAHISSTYNTPFGVSGADFQTLPVGSSAAVEPLGLELVCRAPPGTSEGHWAWEATGAWNCSVENGGCEYLCNRSTNEPRCLCPRDMDLQADGRSCARPVVQSCNELCEHFCVSNAEVPGSYSCMCETGYQLAADGHRCEDVDDCKQGPNPCPQLCVNTKGGFECFCYDGYELVDGECVELLDPCFGSNCEFQCQPVSPTDYRCICAPGFAPKPDEPHKCEMFCNETSCPADCDPNSPTVCECPEGFILDEGSVCTDIDECSQGECFTSECRNFPGSYECICGPDTALAGQISKDCDPIPVREDTKEEEGSGEPPVSPTPGSPTGPPSARPVHSGVLIGISIASLSLVVALLALLCHLRKKQGAARAELEYKCASSAKEVVLQHVRTDRTLQKF</sequence>
<keyword id="KW-0094">Blood coagulation</keyword>
<keyword id="KW-1015">Disulfide bond</keyword>
<keyword id="KW-0245">EGF-like domain</keyword>
<keyword id="KW-0325">Glycoprotein</keyword>
<keyword id="KW-0356">Hemostasis</keyword>
<keyword id="KW-0472">Membrane</keyword>
<keyword id="KW-0654">Proteoglycan</keyword>
<keyword id="KW-0675">Receptor</keyword>
<keyword id="KW-1185">Reference proteome</keyword>
<keyword id="KW-0677">Repeat</keyword>
<keyword id="KW-0732">Signal</keyword>
<keyword id="KW-0812">Transmembrane</keyword>
<keyword id="KW-1133">Transmembrane helix</keyword>